<sequence length="96" mass="10258">MKTLLLTLVVVTIVCLDFGGGLICYMGPKTPRTCPPGQNLCYTKTWCDGFCGSRGKVVVLGCAATCPTVKPGVDITCCATDKCNPFPKTKAPWERP</sequence>
<proteinExistence type="evidence at protein level"/>
<reference key="1">
    <citation type="journal article" date="2008" name="BMC Evol. Biol.">
        <title>Unusual accelerated rate of deletions and insertions in toxin genes in the venom glands of the pygmy copperhead (Austrelaps labialis) from Kangaroo island.</title>
        <authorList>
            <person name="Doley R."/>
            <person name="Tram N.N.B."/>
            <person name="Reza M.A."/>
            <person name="Kini R.M."/>
        </authorList>
    </citation>
    <scope>NUCLEOTIDE SEQUENCE [MRNA]</scope>
    <source>
        <tissue>Venom gland</tissue>
    </source>
</reference>
<reference key="2">
    <citation type="journal article" date="2011" name="Biochem. Pharmacol.">
        <title>alpha-Elapitoxin-Aa2a, a long-chain snake alpha-neurotoxin with potent actions on muscle (alpha1)(2)betagammadelta nicotinic receptors, lacks the classical high affinity for neuronal alpha7 nicotinic receptors.</title>
        <authorList>
            <person name="Blacklow B."/>
            <person name="Kornhauser R."/>
            <person name="Hains P.G."/>
            <person name="Loiacono R."/>
            <person name="Escoubas P."/>
            <person name="Graudins A."/>
            <person name="Nicholson G.M."/>
        </authorList>
    </citation>
    <scope>NOMENCLATURE</scope>
</reference>
<reference key="3">
    <citation type="unpublished observations" date="2012-04">
        <authorList>
            <person name="Nicholson G."/>
        </authorList>
    </citation>
    <scope>PROTEIN SEQUENCE OF 22-96</scope>
    <scope>FUNCTION</scope>
    <scope>SUBCELLULAR LOCATION</scope>
</reference>
<evidence type="ECO:0000250" key="1"/>
<evidence type="ECO:0000269" key="2">
    <source ref="3"/>
</evidence>
<evidence type="ECO:0000305" key="3"/>
<keyword id="KW-0008">Acetylcholine receptor inhibiting toxin</keyword>
<keyword id="KW-0903">Direct protein sequencing</keyword>
<keyword id="KW-1015">Disulfide bond</keyword>
<keyword id="KW-0872">Ion channel impairing toxin</keyword>
<keyword id="KW-0528">Neurotoxin</keyword>
<keyword id="KW-0629">Postsynaptic neurotoxin</keyword>
<keyword id="KW-0964">Secreted</keyword>
<keyword id="KW-0732">Signal</keyword>
<keyword id="KW-0800">Toxin</keyword>
<dbReference type="EMBL" id="EU003085">
    <property type="protein sequence ID" value="ABX58151.1"/>
    <property type="molecule type" value="mRNA"/>
</dbReference>
<dbReference type="SMR" id="B2BRQ5"/>
<dbReference type="GO" id="GO:0005576">
    <property type="term" value="C:extracellular region"/>
    <property type="evidence" value="ECO:0007669"/>
    <property type="project" value="UniProtKB-SubCell"/>
</dbReference>
<dbReference type="GO" id="GO:0030550">
    <property type="term" value="F:acetylcholine receptor inhibitor activity"/>
    <property type="evidence" value="ECO:0007669"/>
    <property type="project" value="UniProtKB-KW"/>
</dbReference>
<dbReference type="GO" id="GO:0099106">
    <property type="term" value="F:ion channel regulator activity"/>
    <property type="evidence" value="ECO:0007669"/>
    <property type="project" value="UniProtKB-KW"/>
</dbReference>
<dbReference type="GO" id="GO:0090729">
    <property type="term" value="F:toxin activity"/>
    <property type="evidence" value="ECO:0007669"/>
    <property type="project" value="UniProtKB-KW"/>
</dbReference>
<dbReference type="CDD" id="cd00206">
    <property type="entry name" value="TFP_snake_toxin"/>
    <property type="match status" value="1"/>
</dbReference>
<dbReference type="Gene3D" id="2.10.60.10">
    <property type="entry name" value="CD59"/>
    <property type="match status" value="1"/>
</dbReference>
<dbReference type="InterPro" id="IPR003571">
    <property type="entry name" value="Snake_3FTx"/>
</dbReference>
<dbReference type="InterPro" id="IPR045860">
    <property type="entry name" value="Snake_toxin-like_sf"/>
</dbReference>
<dbReference type="InterPro" id="IPR018354">
    <property type="entry name" value="Snake_toxin_con_site"/>
</dbReference>
<dbReference type="InterPro" id="IPR054131">
    <property type="entry name" value="Toxin_cobra-type"/>
</dbReference>
<dbReference type="Pfam" id="PF21947">
    <property type="entry name" value="Toxin_cobra-type"/>
    <property type="match status" value="1"/>
</dbReference>
<dbReference type="SUPFAM" id="SSF57302">
    <property type="entry name" value="Snake toxin-like"/>
    <property type="match status" value="1"/>
</dbReference>
<dbReference type="PROSITE" id="PS00272">
    <property type="entry name" value="SNAKE_TOXIN"/>
    <property type="match status" value="1"/>
</dbReference>
<comment type="function">
    <text evidence="2">Potent long-chain postsynaptic neurotoxin. Pseudo-irreversibly inhibits the nicotinic acetylcholine receptor through competitive antagonism.</text>
</comment>
<comment type="subcellular location">
    <subcellularLocation>
        <location evidence="2">Secreted</location>
    </subcellularLocation>
</comment>
<comment type="tissue specificity">
    <text evidence="3">Expressed by the venom gland.</text>
</comment>
<comment type="similarity">
    <text evidence="3">Belongs to the three-finger toxin family. Long-chain subfamily. Type II alpha-neurotoxin sub-subfamily.</text>
</comment>
<feature type="signal peptide" evidence="2">
    <location>
        <begin position="1"/>
        <end position="21"/>
    </location>
</feature>
<feature type="chain" id="PRO_0000417624" description="Alpha-elapitoxin-Al2b">
    <location>
        <begin position="22"/>
        <end position="96"/>
    </location>
</feature>
<feature type="disulfide bond" evidence="1">
    <location>
        <begin position="24"/>
        <end position="41"/>
    </location>
</feature>
<feature type="disulfide bond" evidence="1">
    <location>
        <begin position="34"/>
        <end position="62"/>
    </location>
</feature>
<feature type="disulfide bond" evidence="1">
    <location>
        <begin position="47"/>
        <end position="51"/>
    </location>
</feature>
<feature type="disulfide bond" evidence="1">
    <location>
        <begin position="66"/>
        <end position="77"/>
    </location>
</feature>
<feature type="disulfide bond" evidence="1">
    <location>
        <begin position="78"/>
        <end position="83"/>
    </location>
</feature>
<protein>
    <recommendedName>
        <fullName>Alpha-elapitoxin-Al2b</fullName>
        <shortName>Alpha-EPTX-Al2b</shortName>
    </recommendedName>
</protein>
<organism>
    <name type="scientific">Austrelaps labialis</name>
    <name type="common">Pygmy copperhead</name>
    <name type="synonym">Denisonia superba</name>
    <dbReference type="NCBI Taxonomy" id="471292"/>
    <lineage>
        <taxon>Eukaryota</taxon>
        <taxon>Metazoa</taxon>
        <taxon>Chordata</taxon>
        <taxon>Craniata</taxon>
        <taxon>Vertebrata</taxon>
        <taxon>Euteleostomi</taxon>
        <taxon>Lepidosauria</taxon>
        <taxon>Squamata</taxon>
        <taxon>Bifurcata</taxon>
        <taxon>Unidentata</taxon>
        <taxon>Episquamata</taxon>
        <taxon>Toxicofera</taxon>
        <taxon>Serpentes</taxon>
        <taxon>Colubroidea</taxon>
        <taxon>Elapidae</taxon>
        <taxon>Hydrophiinae</taxon>
        <taxon>Austrelaps</taxon>
    </lineage>
</organism>
<name>3L21_AUSLA</name>
<accession>B2BRQ5</accession>